<organism>
    <name type="scientific">Shigella boydii serotype 4 (strain Sb227)</name>
    <dbReference type="NCBI Taxonomy" id="300268"/>
    <lineage>
        <taxon>Bacteria</taxon>
        <taxon>Pseudomonadati</taxon>
        <taxon>Pseudomonadota</taxon>
        <taxon>Gammaproteobacteria</taxon>
        <taxon>Enterobacterales</taxon>
        <taxon>Enterobacteriaceae</taxon>
        <taxon>Shigella</taxon>
    </lineage>
</organism>
<sequence length="540" mass="59643">MRVNNGLTPQELEAYGISDVHDIVYNPSYDLLYQEELDPSLTGYERGVLTNLGAVAVDTGIFTGRSPKDKYIVRDDTTRDTFWWADKGKGKNDNKPLSPETWQHLKGLVTRQLSGKRLFVVDAFCGANPDTRLSVRFITEVAWQAHFVKNMFIRPSDEELAGFKPDFIVMNGAKCTNPQWKEQGLNSENFVAFNLTERMQLIGGTWYGGEMKKGMFSMMNYLLPLKGIASMHCSANVGEKGDVAVFFGLSGTGKTTLSTDPKRRLIGDDEHGWDDDGVFNFEGGCYAKTIKLSKEAEPEIYNAIRRDALLENVTVREDGTIDFDDGSKTENTRVSYPIYHIDNIVKPVSKAGHATKVIFLTADAFGVLPPVSRLTADQTQYHFLSGFTAKLAGTERGITEPTPTFSACFGAAFLSLHPTQYAEVLVKRMQAAGAQAYLVNTGWNGTGKRISIKDTRAIIDAILNGSLDNAETFTLPMFNLAIPTELPGVDTKILDPRNTYASPEQWQEKAETLAKLFIDNFDKYTDTPAGAALVAAGPKL</sequence>
<name>PCKA_SHIBS</name>
<keyword id="KW-0007">Acetylation</keyword>
<keyword id="KW-0067">ATP-binding</keyword>
<keyword id="KW-0963">Cytoplasm</keyword>
<keyword id="KW-0210">Decarboxylase</keyword>
<keyword id="KW-0312">Gluconeogenesis</keyword>
<keyword id="KW-0456">Lyase</keyword>
<keyword id="KW-0464">Manganese</keyword>
<keyword id="KW-0479">Metal-binding</keyword>
<keyword id="KW-0547">Nucleotide-binding</keyword>
<reference key="1">
    <citation type="journal article" date="2005" name="Nucleic Acids Res.">
        <title>Genome dynamics and diversity of Shigella species, the etiologic agents of bacillary dysentery.</title>
        <authorList>
            <person name="Yang F."/>
            <person name="Yang J."/>
            <person name="Zhang X."/>
            <person name="Chen L."/>
            <person name="Jiang Y."/>
            <person name="Yan Y."/>
            <person name="Tang X."/>
            <person name="Wang J."/>
            <person name="Xiong Z."/>
            <person name="Dong J."/>
            <person name="Xue Y."/>
            <person name="Zhu Y."/>
            <person name="Xu X."/>
            <person name="Sun L."/>
            <person name="Chen S."/>
            <person name="Nie H."/>
            <person name="Peng J."/>
            <person name="Xu J."/>
            <person name="Wang Y."/>
            <person name="Yuan Z."/>
            <person name="Wen Y."/>
            <person name="Yao Z."/>
            <person name="Shen Y."/>
            <person name="Qiang B."/>
            <person name="Hou Y."/>
            <person name="Yu J."/>
            <person name="Jin Q."/>
        </authorList>
    </citation>
    <scope>NUCLEOTIDE SEQUENCE [LARGE SCALE GENOMIC DNA]</scope>
    <source>
        <strain>Sb227</strain>
    </source>
</reference>
<accession>Q31VN1</accession>
<dbReference type="EC" id="4.1.1.49" evidence="1"/>
<dbReference type="EMBL" id="CP000036">
    <property type="protein sequence ID" value="ABB67877.1"/>
    <property type="molecule type" value="Genomic_DNA"/>
</dbReference>
<dbReference type="RefSeq" id="WP_001265681.1">
    <property type="nucleotide sequence ID" value="NC_007613.1"/>
</dbReference>
<dbReference type="SMR" id="Q31VN1"/>
<dbReference type="KEGG" id="sbo:SBO_3390"/>
<dbReference type="HOGENOM" id="CLU_018247_0_1_6"/>
<dbReference type="UniPathway" id="UPA00138"/>
<dbReference type="Proteomes" id="UP000007067">
    <property type="component" value="Chromosome"/>
</dbReference>
<dbReference type="GO" id="GO:0005829">
    <property type="term" value="C:cytosol"/>
    <property type="evidence" value="ECO:0007669"/>
    <property type="project" value="TreeGrafter"/>
</dbReference>
<dbReference type="GO" id="GO:0005524">
    <property type="term" value="F:ATP binding"/>
    <property type="evidence" value="ECO:0007669"/>
    <property type="project" value="UniProtKB-UniRule"/>
</dbReference>
<dbReference type="GO" id="GO:0046872">
    <property type="term" value="F:metal ion binding"/>
    <property type="evidence" value="ECO:0007669"/>
    <property type="project" value="UniProtKB-KW"/>
</dbReference>
<dbReference type="GO" id="GO:0004612">
    <property type="term" value="F:phosphoenolpyruvate carboxykinase (ATP) activity"/>
    <property type="evidence" value="ECO:0007669"/>
    <property type="project" value="UniProtKB-UniRule"/>
</dbReference>
<dbReference type="GO" id="GO:0006094">
    <property type="term" value="P:gluconeogenesis"/>
    <property type="evidence" value="ECO:0007669"/>
    <property type="project" value="UniProtKB-UniRule"/>
</dbReference>
<dbReference type="CDD" id="cd00484">
    <property type="entry name" value="PEPCK_ATP"/>
    <property type="match status" value="1"/>
</dbReference>
<dbReference type="FunFam" id="2.170.8.10:FF:000001">
    <property type="entry name" value="Phosphoenolpyruvate carboxykinase (ATP)"/>
    <property type="match status" value="1"/>
</dbReference>
<dbReference type="FunFam" id="3.40.449.10:FF:000001">
    <property type="entry name" value="Phosphoenolpyruvate carboxykinase (ATP)"/>
    <property type="match status" value="1"/>
</dbReference>
<dbReference type="Gene3D" id="3.90.228.20">
    <property type="match status" value="1"/>
</dbReference>
<dbReference type="Gene3D" id="3.40.449.10">
    <property type="entry name" value="Phosphoenolpyruvate Carboxykinase, domain 1"/>
    <property type="match status" value="1"/>
</dbReference>
<dbReference type="Gene3D" id="2.170.8.10">
    <property type="entry name" value="Phosphoenolpyruvate Carboxykinase, domain 2"/>
    <property type="match status" value="1"/>
</dbReference>
<dbReference type="HAMAP" id="MF_00453">
    <property type="entry name" value="PEPCK_ATP"/>
    <property type="match status" value="1"/>
</dbReference>
<dbReference type="InterPro" id="IPR001272">
    <property type="entry name" value="PEP_carboxykinase_ATP"/>
</dbReference>
<dbReference type="InterPro" id="IPR013035">
    <property type="entry name" value="PEP_carboxykinase_C"/>
</dbReference>
<dbReference type="InterPro" id="IPR008210">
    <property type="entry name" value="PEP_carboxykinase_N"/>
</dbReference>
<dbReference type="InterPro" id="IPR015994">
    <property type="entry name" value="PEPCK_ATP_CS"/>
</dbReference>
<dbReference type="NCBIfam" id="TIGR00224">
    <property type="entry name" value="pckA"/>
    <property type="match status" value="1"/>
</dbReference>
<dbReference type="NCBIfam" id="NF006819">
    <property type="entry name" value="PRK09344.1-1"/>
    <property type="match status" value="1"/>
</dbReference>
<dbReference type="NCBIfam" id="NF006820">
    <property type="entry name" value="PRK09344.1-2"/>
    <property type="match status" value="1"/>
</dbReference>
<dbReference type="NCBIfam" id="NF006821">
    <property type="entry name" value="PRK09344.1-3"/>
    <property type="match status" value="1"/>
</dbReference>
<dbReference type="PANTHER" id="PTHR30031:SF0">
    <property type="entry name" value="PHOSPHOENOLPYRUVATE CARBOXYKINASE (ATP)"/>
    <property type="match status" value="1"/>
</dbReference>
<dbReference type="PANTHER" id="PTHR30031">
    <property type="entry name" value="PHOSPHOENOLPYRUVATE CARBOXYKINASE ATP"/>
    <property type="match status" value="1"/>
</dbReference>
<dbReference type="Pfam" id="PF01293">
    <property type="entry name" value="PEPCK_ATP"/>
    <property type="match status" value="1"/>
</dbReference>
<dbReference type="PIRSF" id="PIRSF006294">
    <property type="entry name" value="PEP_crbxkin"/>
    <property type="match status" value="1"/>
</dbReference>
<dbReference type="SUPFAM" id="SSF68923">
    <property type="entry name" value="PEP carboxykinase N-terminal domain"/>
    <property type="match status" value="1"/>
</dbReference>
<dbReference type="SUPFAM" id="SSF53795">
    <property type="entry name" value="PEP carboxykinase-like"/>
    <property type="match status" value="1"/>
</dbReference>
<dbReference type="PROSITE" id="PS00532">
    <property type="entry name" value="PEPCK_ATP"/>
    <property type="match status" value="1"/>
</dbReference>
<gene>
    <name evidence="1" type="primary">pckA</name>
    <name type="ordered locus">SBO_3390</name>
</gene>
<feature type="chain" id="PRO_0000236942" description="Phosphoenolpyruvate carboxykinase (ATP)">
    <location>
        <begin position="1"/>
        <end position="540"/>
    </location>
</feature>
<feature type="binding site" evidence="1">
    <location>
        <position position="65"/>
    </location>
    <ligand>
        <name>substrate</name>
    </ligand>
</feature>
<feature type="binding site" evidence="1">
    <location>
        <position position="207"/>
    </location>
    <ligand>
        <name>substrate</name>
    </ligand>
</feature>
<feature type="binding site" evidence="1">
    <location>
        <position position="213"/>
    </location>
    <ligand>
        <name>ATP</name>
        <dbReference type="ChEBI" id="CHEBI:30616"/>
    </ligand>
</feature>
<feature type="binding site" evidence="1">
    <location>
        <position position="213"/>
    </location>
    <ligand>
        <name>Mn(2+)</name>
        <dbReference type="ChEBI" id="CHEBI:29035"/>
    </ligand>
</feature>
<feature type="binding site" evidence="1">
    <location>
        <position position="213"/>
    </location>
    <ligand>
        <name>substrate</name>
    </ligand>
</feature>
<feature type="binding site" evidence="1">
    <location>
        <position position="232"/>
    </location>
    <ligand>
        <name>ATP</name>
        <dbReference type="ChEBI" id="CHEBI:30616"/>
    </ligand>
</feature>
<feature type="binding site" evidence="1">
    <location>
        <position position="232"/>
    </location>
    <ligand>
        <name>Mn(2+)</name>
        <dbReference type="ChEBI" id="CHEBI:29035"/>
    </ligand>
</feature>
<feature type="binding site" evidence="1">
    <location>
        <begin position="248"/>
        <end position="256"/>
    </location>
    <ligand>
        <name>ATP</name>
        <dbReference type="ChEBI" id="CHEBI:30616"/>
    </ligand>
</feature>
<feature type="binding site" evidence="1">
    <location>
        <position position="269"/>
    </location>
    <ligand>
        <name>Mn(2+)</name>
        <dbReference type="ChEBI" id="CHEBI:29035"/>
    </ligand>
</feature>
<feature type="binding site" evidence="1">
    <location>
        <position position="297"/>
    </location>
    <ligand>
        <name>ATP</name>
        <dbReference type="ChEBI" id="CHEBI:30616"/>
    </ligand>
</feature>
<feature type="binding site" evidence="1">
    <location>
        <position position="333"/>
    </location>
    <ligand>
        <name>ATP</name>
        <dbReference type="ChEBI" id="CHEBI:30616"/>
    </ligand>
</feature>
<feature type="binding site" evidence="1">
    <location>
        <position position="333"/>
    </location>
    <ligand>
        <name>substrate</name>
    </ligand>
</feature>
<feature type="binding site" evidence="1">
    <location>
        <begin position="449"/>
        <end position="450"/>
    </location>
    <ligand>
        <name>ATP</name>
        <dbReference type="ChEBI" id="CHEBI:30616"/>
    </ligand>
</feature>
<feature type="binding site" evidence="1">
    <location>
        <position position="455"/>
    </location>
    <ligand>
        <name>ATP</name>
        <dbReference type="ChEBI" id="CHEBI:30616"/>
    </ligand>
</feature>
<feature type="modified residue" description="N6-acetyllysine" evidence="1">
    <location>
        <position position="87"/>
    </location>
</feature>
<feature type="modified residue" description="N6-acetyllysine" evidence="1">
    <location>
        <position position="523"/>
    </location>
</feature>
<proteinExistence type="inferred from homology"/>
<evidence type="ECO:0000255" key="1">
    <source>
        <dbReference type="HAMAP-Rule" id="MF_00453"/>
    </source>
</evidence>
<comment type="function">
    <text evidence="1">Involved in the gluconeogenesis. Catalyzes the conversion of oxaloacetate (OAA) to phosphoenolpyruvate (PEP) through direct phosphoryl transfer between the nucleoside triphosphate and OAA.</text>
</comment>
<comment type="catalytic activity">
    <reaction evidence="1">
        <text>oxaloacetate + ATP = phosphoenolpyruvate + ADP + CO2</text>
        <dbReference type="Rhea" id="RHEA:18617"/>
        <dbReference type="ChEBI" id="CHEBI:16452"/>
        <dbReference type="ChEBI" id="CHEBI:16526"/>
        <dbReference type="ChEBI" id="CHEBI:30616"/>
        <dbReference type="ChEBI" id="CHEBI:58702"/>
        <dbReference type="ChEBI" id="CHEBI:456216"/>
        <dbReference type="EC" id="4.1.1.49"/>
    </reaction>
</comment>
<comment type="cofactor">
    <cofactor evidence="1">
        <name>Mn(2+)</name>
        <dbReference type="ChEBI" id="CHEBI:29035"/>
    </cofactor>
    <text evidence="1">Binds 1 Mn(2+) ion per subunit.</text>
</comment>
<comment type="pathway">
    <text evidence="1">Carbohydrate biosynthesis; gluconeogenesis.</text>
</comment>
<comment type="subunit">
    <text evidence="1">Monomer.</text>
</comment>
<comment type="subcellular location">
    <subcellularLocation>
        <location evidence="1">Cytoplasm</location>
    </subcellularLocation>
</comment>
<comment type="similarity">
    <text evidence="1">Belongs to the phosphoenolpyruvate carboxykinase (ATP) family.</text>
</comment>
<protein>
    <recommendedName>
        <fullName evidence="1">Phosphoenolpyruvate carboxykinase (ATP)</fullName>
        <shortName evidence="1">PCK</shortName>
        <shortName evidence="1">PEP carboxykinase</shortName>
        <shortName evidence="1">PEPCK</shortName>
        <ecNumber evidence="1">4.1.1.49</ecNumber>
    </recommendedName>
</protein>